<gene>
    <name evidence="1" type="primary">rpmB</name>
    <name type="ordered locus">Bpro_3802</name>
</gene>
<reference key="1">
    <citation type="journal article" date="2008" name="Appl. Environ. Microbiol.">
        <title>The genome of Polaromonas sp. strain JS666: insights into the evolution of a hydrocarbon- and xenobiotic-degrading bacterium, and features of relevance to biotechnology.</title>
        <authorList>
            <person name="Mattes T.E."/>
            <person name="Alexander A.K."/>
            <person name="Richardson P.M."/>
            <person name="Munk A.C."/>
            <person name="Han C.S."/>
            <person name="Stothard P."/>
            <person name="Coleman N.V."/>
        </authorList>
    </citation>
    <scope>NUCLEOTIDE SEQUENCE [LARGE SCALE GENOMIC DNA]</scope>
    <source>
        <strain>JS666 / ATCC BAA-500</strain>
    </source>
</reference>
<sequence>MARVCQVTGKGPMVGNNVSHANNKTKRRFMPNLQYRRFWVESENRWVRLRITSAGLRLIDKKGIDAILVDLRARGEI</sequence>
<evidence type="ECO:0000255" key="1">
    <source>
        <dbReference type="HAMAP-Rule" id="MF_00373"/>
    </source>
</evidence>
<evidence type="ECO:0000305" key="2"/>
<dbReference type="EMBL" id="CP000316">
    <property type="protein sequence ID" value="ABE45700.1"/>
    <property type="molecule type" value="Genomic_DNA"/>
</dbReference>
<dbReference type="RefSeq" id="WP_011484691.1">
    <property type="nucleotide sequence ID" value="NC_007948.1"/>
</dbReference>
<dbReference type="SMR" id="Q125U2"/>
<dbReference type="STRING" id="296591.Bpro_3802"/>
<dbReference type="KEGG" id="pol:Bpro_3802"/>
<dbReference type="eggNOG" id="COG0227">
    <property type="taxonomic scope" value="Bacteria"/>
</dbReference>
<dbReference type="HOGENOM" id="CLU_064548_3_1_4"/>
<dbReference type="OrthoDB" id="9805609at2"/>
<dbReference type="Proteomes" id="UP000001983">
    <property type="component" value="Chromosome"/>
</dbReference>
<dbReference type="GO" id="GO:0022625">
    <property type="term" value="C:cytosolic large ribosomal subunit"/>
    <property type="evidence" value="ECO:0007669"/>
    <property type="project" value="TreeGrafter"/>
</dbReference>
<dbReference type="GO" id="GO:0003735">
    <property type="term" value="F:structural constituent of ribosome"/>
    <property type="evidence" value="ECO:0007669"/>
    <property type="project" value="InterPro"/>
</dbReference>
<dbReference type="GO" id="GO:0006412">
    <property type="term" value="P:translation"/>
    <property type="evidence" value="ECO:0007669"/>
    <property type="project" value="UniProtKB-UniRule"/>
</dbReference>
<dbReference type="FunFam" id="2.30.170.40:FF:000001">
    <property type="entry name" value="50S ribosomal protein L28"/>
    <property type="match status" value="1"/>
</dbReference>
<dbReference type="Gene3D" id="2.30.170.40">
    <property type="entry name" value="Ribosomal protein L28/L24"/>
    <property type="match status" value="1"/>
</dbReference>
<dbReference type="HAMAP" id="MF_00373">
    <property type="entry name" value="Ribosomal_bL28"/>
    <property type="match status" value="1"/>
</dbReference>
<dbReference type="InterPro" id="IPR026569">
    <property type="entry name" value="Ribosomal_bL28"/>
</dbReference>
<dbReference type="InterPro" id="IPR034704">
    <property type="entry name" value="Ribosomal_bL28/bL31-like_sf"/>
</dbReference>
<dbReference type="InterPro" id="IPR001383">
    <property type="entry name" value="Ribosomal_bL28_bact-type"/>
</dbReference>
<dbReference type="InterPro" id="IPR037147">
    <property type="entry name" value="Ribosomal_bL28_sf"/>
</dbReference>
<dbReference type="NCBIfam" id="TIGR00009">
    <property type="entry name" value="L28"/>
    <property type="match status" value="1"/>
</dbReference>
<dbReference type="PANTHER" id="PTHR13528">
    <property type="entry name" value="39S RIBOSOMAL PROTEIN L28, MITOCHONDRIAL"/>
    <property type="match status" value="1"/>
</dbReference>
<dbReference type="PANTHER" id="PTHR13528:SF2">
    <property type="entry name" value="LARGE RIBOSOMAL SUBUNIT PROTEIN BL28M"/>
    <property type="match status" value="1"/>
</dbReference>
<dbReference type="Pfam" id="PF00830">
    <property type="entry name" value="Ribosomal_L28"/>
    <property type="match status" value="1"/>
</dbReference>
<dbReference type="SUPFAM" id="SSF143800">
    <property type="entry name" value="L28p-like"/>
    <property type="match status" value="1"/>
</dbReference>
<keyword id="KW-1185">Reference proteome</keyword>
<keyword id="KW-0687">Ribonucleoprotein</keyword>
<keyword id="KW-0689">Ribosomal protein</keyword>
<comment type="similarity">
    <text evidence="1">Belongs to the bacterial ribosomal protein bL28 family.</text>
</comment>
<feature type="chain" id="PRO_1000007301" description="Large ribosomal subunit protein bL28">
    <location>
        <begin position="1"/>
        <end position="77"/>
    </location>
</feature>
<protein>
    <recommendedName>
        <fullName evidence="1">Large ribosomal subunit protein bL28</fullName>
    </recommendedName>
    <alternativeName>
        <fullName evidence="2">50S ribosomal protein L28</fullName>
    </alternativeName>
</protein>
<name>RL28_POLSJ</name>
<proteinExistence type="inferred from homology"/>
<accession>Q125U2</accession>
<organism>
    <name type="scientific">Polaromonas sp. (strain JS666 / ATCC BAA-500)</name>
    <dbReference type="NCBI Taxonomy" id="296591"/>
    <lineage>
        <taxon>Bacteria</taxon>
        <taxon>Pseudomonadati</taxon>
        <taxon>Pseudomonadota</taxon>
        <taxon>Betaproteobacteria</taxon>
        <taxon>Burkholderiales</taxon>
        <taxon>Comamonadaceae</taxon>
        <taxon>Polaromonas</taxon>
    </lineage>
</organism>